<dbReference type="EC" id="4.2.3.5" evidence="1"/>
<dbReference type="EMBL" id="AE003852">
    <property type="protein sequence ID" value="AAF95261.1"/>
    <property type="molecule type" value="Genomic_DNA"/>
</dbReference>
<dbReference type="PIR" id="F82115">
    <property type="entry name" value="F82115"/>
</dbReference>
<dbReference type="RefSeq" id="NP_231747.1">
    <property type="nucleotide sequence ID" value="NC_002505.1"/>
</dbReference>
<dbReference type="RefSeq" id="WP_000918437.1">
    <property type="nucleotide sequence ID" value="NZ_LT906614.1"/>
</dbReference>
<dbReference type="SMR" id="Q9KQ85"/>
<dbReference type="STRING" id="243277.VC_2116"/>
<dbReference type="DNASU" id="2613372"/>
<dbReference type="EnsemblBacteria" id="AAF95261">
    <property type="protein sequence ID" value="AAF95261"/>
    <property type="gene ID" value="VC_2116"/>
</dbReference>
<dbReference type="GeneID" id="89513901"/>
<dbReference type="KEGG" id="vch:VC_2116"/>
<dbReference type="PATRIC" id="fig|243277.26.peg.2022"/>
<dbReference type="eggNOG" id="COG0082">
    <property type="taxonomic scope" value="Bacteria"/>
</dbReference>
<dbReference type="HOGENOM" id="CLU_034547_0_2_6"/>
<dbReference type="UniPathway" id="UPA00053">
    <property type="reaction ID" value="UER00090"/>
</dbReference>
<dbReference type="Proteomes" id="UP000000584">
    <property type="component" value="Chromosome 1"/>
</dbReference>
<dbReference type="GO" id="GO:0005829">
    <property type="term" value="C:cytosol"/>
    <property type="evidence" value="ECO:0000318"/>
    <property type="project" value="GO_Central"/>
</dbReference>
<dbReference type="GO" id="GO:0004107">
    <property type="term" value="F:chorismate synthase activity"/>
    <property type="evidence" value="ECO:0000318"/>
    <property type="project" value="GO_Central"/>
</dbReference>
<dbReference type="GO" id="GO:0010181">
    <property type="term" value="F:FMN binding"/>
    <property type="evidence" value="ECO:0000318"/>
    <property type="project" value="GO_Central"/>
</dbReference>
<dbReference type="GO" id="GO:0008652">
    <property type="term" value="P:amino acid biosynthetic process"/>
    <property type="evidence" value="ECO:0007669"/>
    <property type="project" value="UniProtKB-KW"/>
</dbReference>
<dbReference type="GO" id="GO:0009073">
    <property type="term" value="P:aromatic amino acid family biosynthetic process"/>
    <property type="evidence" value="ECO:0000318"/>
    <property type="project" value="GO_Central"/>
</dbReference>
<dbReference type="GO" id="GO:0009423">
    <property type="term" value="P:chorismate biosynthetic process"/>
    <property type="evidence" value="ECO:0000318"/>
    <property type="project" value="GO_Central"/>
</dbReference>
<dbReference type="CDD" id="cd07304">
    <property type="entry name" value="Chorismate_synthase"/>
    <property type="match status" value="1"/>
</dbReference>
<dbReference type="FunFam" id="3.60.150.10:FF:000001">
    <property type="entry name" value="Chorismate synthase"/>
    <property type="match status" value="1"/>
</dbReference>
<dbReference type="Gene3D" id="3.60.150.10">
    <property type="entry name" value="Chorismate synthase AroC"/>
    <property type="match status" value="1"/>
</dbReference>
<dbReference type="HAMAP" id="MF_00300">
    <property type="entry name" value="Chorismate_synth"/>
    <property type="match status" value="1"/>
</dbReference>
<dbReference type="InterPro" id="IPR000453">
    <property type="entry name" value="Chorismate_synth"/>
</dbReference>
<dbReference type="InterPro" id="IPR035904">
    <property type="entry name" value="Chorismate_synth_AroC_sf"/>
</dbReference>
<dbReference type="InterPro" id="IPR020541">
    <property type="entry name" value="Chorismate_synthase_CS"/>
</dbReference>
<dbReference type="NCBIfam" id="TIGR00033">
    <property type="entry name" value="aroC"/>
    <property type="match status" value="1"/>
</dbReference>
<dbReference type="NCBIfam" id="NF003793">
    <property type="entry name" value="PRK05382.1"/>
    <property type="match status" value="1"/>
</dbReference>
<dbReference type="PANTHER" id="PTHR21085">
    <property type="entry name" value="CHORISMATE SYNTHASE"/>
    <property type="match status" value="1"/>
</dbReference>
<dbReference type="PANTHER" id="PTHR21085:SF0">
    <property type="entry name" value="CHORISMATE SYNTHASE"/>
    <property type="match status" value="1"/>
</dbReference>
<dbReference type="Pfam" id="PF01264">
    <property type="entry name" value="Chorismate_synt"/>
    <property type="match status" value="1"/>
</dbReference>
<dbReference type="PIRSF" id="PIRSF001456">
    <property type="entry name" value="Chorismate_synth"/>
    <property type="match status" value="1"/>
</dbReference>
<dbReference type="SUPFAM" id="SSF103263">
    <property type="entry name" value="Chorismate synthase, AroC"/>
    <property type="match status" value="1"/>
</dbReference>
<dbReference type="PROSITE" id="PS00787">
    <property type="entry name" value="CHORISMATE_SYNTHASE_1"/>
    <property type="match status" value="1"/>
</dbReference>
<dbReference type="PROSITE" id="PS00788">
    <property type="entry name" value="CHORISMATE_SYNTHASE_2"/>
    <property type="match status" value="1"/>
</dbReference>
<dbReference type="PROSITE" id="PS00789">
    <property type="entry name" value="CHORISMATE_SYNTHASE_3"/>
    <property type="match status" value="1"/>
</dbReference>
<keyword id="KW-0028">Amino-acid biosynthesis</keyword>
<keyword id="KW-0057">Aromatic amino acid biosynthesis</keyword>
<keyword id="KW-0274">FAD</keyword>
<keyword id="KW-0285">Flavoprotein</keyword>
<keyword id="KW-0288">FMN</keyword>
<keyword id="KW-0456">Lyase</keyword>
<keyword id="KW-0521">NADP</keyword>
<keyword id="KW-1185">Reference proteome</keyword>
<accession>Q9KQ85</accession>
<reference key="1">
    <citation type="journal article" date="2000" name="Nature">
        <title>DNA sequence of both chromosomes of the cholera pathogen Vibrio cholerae.</title>
        <authorList>
            <person name="Heidelberg J.F."/>
            <person name="Eisen J.A."/>
            <person name="Nelson W.C."/>
            <person name="Clayton R.A."/>
            <person name="Gwinn M.L."/>
            <person name="Dodson R.J."/>
            <person name="Haft D.H."/>
            <person name="Hickey E.K."/>
            <person name="Peterson J.D."/>
            <person name="Umayam L.A."/>
            <person name="Gill S.R."/>
            <person name="Nelson K.E."/>
            <person name="Read T.D."/>
            <person name="Tettelin H."/>
            <person name="Richardson D.L."/>
            <person name="Ermolaeva M.D."/>
            <person name="Vamathevan J.J."/>
            <person name="Bass S."/>
            <person name="Qin H."/>
            <person name="Dragoi I."/>
            <person name="Sellers P."/>
            <person name="McDonald L.A."/>
            <person name="Utterback T.R."/>
            <person name="Fleischmann R.D."/>
            <person name="Nierman W.C."/>
            <person name="White O."/>
            <person name="Salzberg S.L."/>
            <person name="Smith H.O."/>
            <person name="Colwell R.R."/>
            <person name="Mekalanos J.J."/>
            <person name="Venter J.C."/>
            <person name="Fraser C.M."/>
        </authorList>
    </citation>
    <scope>NUCLEOTIDE SEQUENCE [LARGE SCALE GENOMIC DNA]</scope>
    <source>
        <strain>ATCC 39315 / El Tor Inaba N16961</strain>
    </source>
</reference>
<sequence>MAGNSIGQHFRVTTFGESHGIALGCIVDGCPPGLTISEADLQVDLDRRRPGTSRYTTQRREPDEVKILSGVFEGKTTGTSIGLLIENTDQRSKDYSDIKDKFRPGHADYTYHQKYGVRDYRGGGRSSARETAMRVAAGAIAKKYLQQEFGIEVRAYLSQMGEVAIDKVDWNEIENNDFFCPDVDKVAAFDELIRELKKEGDSIGAKIQVVATGVPVGLGEPVFDRLDADIAHALMSINAVKGVEIGDGFDVVRQKGSQHRDPLTPQGFRSNHSGGILGGISSGQDIVANIALKPTSSITVPGETIDVNGEPTELITKGRHDPCVGIRAVPIAEAMLAIVLMDHLLRHRGQNQGVVTTTPKI</sequence>
<name>AROC_VIBCH</name>
<organism>
    <name type="scientific">Vibrio cholerae serotype O1 (strain ATCC 39315 / El Tor Inaba N16961)</name>
    <dbReference type="NCBI Taxonomy" id="243277"/>
    <lineage>
        <taxon>Bacteria</taxon>
        <taxon>Pseudomonadati</taxon>
        <taxon>Pseudomonadota</taxon>
        <taxon>Gammaproteobacteria</taxon>
        <taxon>Vibrionales</taxon>
        <taxon>Vibrionaceae</taxon>
        <taxon>Vibrio</taxon>
    </lineage>
</organism>
<comment type="function">
    <text evidence="1">Catalyzes the anti-1,4-elimination of the C-3 phosphate and the C-6 proR hydrogen from 5-enolpyruvylshikimate-3-phosphate (EPSP) to yield chorismate, which is the branch point compound that serves as the starting substrate for the three terminal pathways of aromatic amino acid biosynthesis. This reaction introduces a second double bond into the aromatic ring system.</text>
</comment>
<comment type="catalytic activity">
    <reaction evidence="1">
        <text>5-O-(1-carboxyvinyl)-3-phosphoshikimate = chorismate + phosphate</text>
        <dbReference type="Rhea" id="RHEA:21020"/>
        <dbReference type="ChEBI" id="CHEBI:29748"/>
        <dbReference type="ChEBI" id="CHEBI:43474"/>
        <dbReference type="ChEBI" id="CHEBI:57701"/>
        <dbReference type="EC" id="4.2.3.5"/>
    </reaction>
</comment>
<comment type="cofactor">
    <cofactor evidence="1">
        <name>FMNH2</name>
        <dbReference type="ChEBI" id="CHEBI:57618"/>
    </cofactor>
    <text evidence="1">Reduced FMN (FMNH(2)).</text>
</comment>
<comment type="pathway">
    <text evidence="1">Metabolic intermediate biosynthesis; chorismate biosynthesis; chorismate from D-erythrose 4-phosphate and phosphoenolpyruvate: step 7/7.</text>
</comment>
<comment type="subunit">
    <text evidence="1">Homotetramer.</text>
</comment>
<comment type="similarity">
    <text evidence="1">Belongs to the chorismate synthase family.</text>
</comment>
<feature type="chain" id="PRO_0000140672" description="Chorismate synthase">
    <location>
        <begin position="1"/>
        <end position="361"/>
    </location>
</feature>
<feature type="binding site" evidence="1">
    <location>
        <position position="48"/>
    </location>
    <ligand>
        <name>NADP(+)</name>
        <dbReference type="ChEBI" id="CHEBI:58349"/>
    </ligand>
</feature>
<feature type="binding site" evidence="1">
    <location>
        <position position="54"/>
    </location>
    <ligand>
        <name>NADP(+)</name>
        <dbReference type="ChEBI" id="CHEBI:58349"/>
    </ligand>
</feature>
<feature type="binding site" evidence="1">
    <location>
        <begin position="125"/>
        <end position="127"/>
    </location>
    <ligand>
        <name>FMN</name>
        <dbReference type="ChEBI" id="CHEBI:58210"/>
    </ligand>
</feature>
<feature type="binding site" evidence="1">
    <location>
        <begin position="238"/>
        <end position="239"/>
    </location>
    <ligand>
        <name>FMN</name>
        <dbReference type="ChEBI" id="CHEBI:58210"/>
    </ligand>
</feature>
<feature type="binding site" evidence="1">
    <location>
        <position position="278"/>
    </location>
    <ligand>
        <name>FMN</name>
        <dbReference type="ChEBI" id="CHEBI:58210"/>
    </ligand>
</feature>
<feature type="binding site" evidence="1">
    <location>
        <begin position="293"/>
        <end position="297"/>
    </location>
    <ligand>
        <name>FMN</name>
        <dbReference type="ChEBI" id="CHEBI:58210"/>
    </ligand>
</feature>
<feature type="binding site" evidence="1">
    <location>
        <position position="319"/>
    </location>
    <ligand>
        <name>FMN</name>
        <dbReference type="ChEBI" id="CHEBI:58210"/>
    </ligand>
</feature>
<proteinExistence type="inferred from homology"/>
<evidence type="ECO:0000255" key="1">
    <source>
        <dbReference type="HAMAP-Rule" id="MF_00300"/>
    </source>
</evidence>
<protein>
    <recommendedName>
        <fullName evidence="1">Chorismate synthase</fullName>
        <shortName evidence="1">CS</shortName>
        <ecNumber evidence="1">4.2.3.5</ecNumber>
    </recommendedName>
    <alternativeName>
        <fullName evidence="1">5-enolpyruvylshikimate-3-phosphate phospholyase</fullName>
    </alternativeName>
</protein>
<gene>
    <name evidence="1" type="primary">aroC</name>
    <name type="ordered locus">VC_2116</name>
</gene>